<comment type="similarity">
    <text evidence="1">Belongs to the bacterial ribosomal protein bL36 family.</text>
</comment>
<gene>
    <name evidence="1" type="primary">rpmJ</name>
    <name type="ordered locus">HY04AAS1_0289</name>
</gene>
<reference key="1">
    <citation type="journal article" date="2009" name="J. Bacteriol.">
        <title>Complete and draft genome sequences of six members of the Aquificales.</title>
        <authorList>
            <person name="Reysenbach A.-L."/>
            <person name="Hamamura N."/>
            <person name="Podar M."/>
            <person name="Griffiths E."/>
            <person name="Ferreira S."/>
            <person name="Hochstein R."/>
            <person name="Heidelberg J."/>
            <person name="Johnson J."/>
            <person name="Mead D."/>
            <person name="Pohorille A."/>
            <person name="Sarmiento M."/>
            <person name="Schweighofer K."/>
            <person name="Seshadri R."/>
            <person name="Voytek M.A."/>
        </authorList>
    </citation>
    <scope>NUCLEOTIDE SEQUENCE [LARGE SCALE GENOMIC DNA]</scope>
    <source>
        <strain>Y04AAS1</strain>
    </source>
</reference>
<protein>
    <recommendedName>
        <fullName evidence="1">Large ribosomal subunit protein bL36</fullName>
    </recommendedName>
    <alternativeName>
        <fullName evidence="2">50S ribosomal protein L36</fullName>
    </alternativeName>
</protein>
<organism>
    <name type="scientific">Hydrogenobaculum sp. (strain Y04AAS1)</name>
    <dbReference type="NCBI Taxonomy" id="380749"/>
    <lineage>
        <taxon>Bacteria</taxon>
        <taxon>Pseudomonadati</taxon>
        <taxon>Aquificota</taxon>
        <taxon>Aquificia</taxon>
        <taxon>Aquificales</taxon>
        <taxon>Aquificaceae</taxon>
        <taxon>Hydrogenobaculum</taxon>
    </lineage>
</organism>
<feature type="chain" id="PRO_1000101033" description="Large ribosomal subunit protein bL36">
    <location>
        <begin position="1"/>
        <end position="37"/>
    </location>
</feature>
<keyword id="KW-0687">Ribonucleoprotein</keyword>
<keyword id="KW-0689">Ribosomal protein</keyword>
<dbReference type="EMBL" id="CP001130">
    <property type="protein sequence ID" value="ACG56979.1"/>
    <property type="molecule type" value="Genomic_DNA"/>
</dbReference>
<dbReference type="RefSeq" id="WP_012513335.1">
    <property type="nucleotide sequence ID" value="NC_011126.1"/>
</dbReference>
<dbReference type="SMR" id="B4U768"/>
<dbReference type="STRING" id="380749.HY04AAS1_0289"/>
<dbReference type="KEGG" id="hya:HY04AAS1_0289"/>
<dbReference type="eggNOG" id="COG0257">
    <property type="taxonomic scope" value="Bacteria"/>
</dbReference>
<dbReference type="HOGENOM" id="CLU_135723_6_2_0"/>
<dbReference type="GO" id="GO:0005737">
    <property type="term" value="C:cytoplasm"/>
    <property type="evidence" value="ECO:0007669"/>
    <property type="project" value="UniProtKB-ARBA"/>
</dbReference>
<dbReference type="GO" id="GO:1990904">
    <property type="term" value="C:ribonucleoprotein complex"/>
    <property type="evidence" value="ECO:0007669"/>
    <property type="project" value="UniProtKB-KW"/>
</dbReference>
<dbReference type="GO" id="GO:0005840">
    <property type="term" value="C:ribosome"/>
    <property type="evidence" value="ECO:0007669"/>
    <property type="project" value="UniProtKB-KW"/>
</dbReference>
<dbReference type="GO" id="GO:0003735">
    <property type="term" value="F:structural constituent of ribosome"/>
    <property type="evidence" value="ECO:0007669"/>
    <property type="project" value="InterPro"/>
</dbReference>
<dbReference type="GO" id="GO:0006412">
    <property type="term" value="P:translation"/>
    <property type="evidence" value="ECO:0007669"/>
    <property type="project" value="UniProtKB-UniRule"/>
</dbReference>
<dbReference type="HAMAP" id="MF_00251">
    <property type="entry name" value="Ribosomal_bL36"/>
    <property type="match status" value="1"/>
</dbReference>
<dbReference type="InterPro" id="IPR000473">
    <property type="entry name" value="Ribosomal_bL36"/>
</dbReference>
<dbReference type="InterPro" id="IPR035977">
    <property type="entry name" value="Ribosomal_bL36_sp"/>
</dbReference>
<dbReference type="NCBIfam" id="TIGR01022">
    <property type="entry name" value="rpmJ_bact"/>
    <property type="match status" value="1"/>
</dbReference>
<dbReference type="PANTHER" id="PTHR42888">
    <property type="entry name" value="50S RIBOSOMAL PROTEIN L36, CHLOROPLASTIC"/>
    <property type="match status" value="1"/>
</dbReference>
<dbReference type="PANTHER" id="PTHR42888:SF1">
    <property type="entry name" value="LARGE RIBOSOMAL SUBUNIT PROTEIN BL36C"/>
    <property type="match status" value="1"/>
</dbReference>
<dbReference type="Pfam" id="PF00444">
    <property type="entry name" value="Ribosomal_L36"/>
    <property type="match status" value="1"/>
</dbReference>
<dbReference type="SUPFAM" id="SSF57840">
    <property type="entry name" value="Ribosomal protein L36"/>
    <property type="match status" value="1"/>
</dbReference>
<dbReference type="PROSITE" id="PS00828">
    <property type="entry name" value="RIBOSOMAL_L36"/>
    <property type="match status" value="1"/>
</dbReference>
<name>RL36_HYDS0</name>
<accession>B4U768</accession>
<evidence type="ECO:0000255" key="1">
    <source>
        <dbReference type="HAMAP-Rule" id="MF_00251"/>
    </source>
</evidence>
<evidence type="ECO:0000305" key="2"/>
<proteinExistence type="inferred from homology"/>
<sequence>MKVRPSVKPICPKCKIIRRKKRVMVICENPKHKQRQG</sequence>